<sequence>MKRIAFVFSTAPHGSASGREGLDALLATSALTEALGVFFISDGVFQLLPGQKPDAVLARDYIATFKLFDLYDIDQCWICAASLRERGLENVNFVVNATPLEPVALRRELGNYDVILRF</sequence>
<keyword id="KW-0963">Cytoplasm</keyword>
<keyword id="KW-0819">tRNA processing</keyword>
<comment type="function">
    <text evidence="1">Part of a sulfur-relay system required for 2-thiolation of 5-methylaminomethyl-2-thiouridine (mnm(5)s(2)U) at tRNA wobble positions.</text>
</comment>
<comment type="subunit">
    <text evidence="1">Heterohexamer, formed by a dimer of trimers. The hexameric TusBCD complex contains 2 copies each of TusB, TusC and TusD. The TusBCD complex interacts with TusE.</text>
</comment>
<comment type="subcellular location">
    <subcellularLocation>
        <location evidence="1">Cytoplasm</location>
    </subcellularLocation>
</comment>
<comment type="similarity">
    <text evidence="1">Belongs to the DsrF/TusC family.</text>
</comment>
<evidence type="ECO:0000255" key="1">
    <source>
        <dbReference type="HAMAP-Rule" id="MF_00389"/>
    </source>
</evidence>
<feature type="chain" id="PRO_1000122850" description="Protein TusC">
    <location>
        <begin position="1"/>
        <end position="118"/>
    </location>
</feature>
<organism>
    <name type="scientific">Salmonella paratyphi A (strain AKU_12601)</name>
    <dbReference type="NCBI Taxonomy" id="554290"/>
    <lineage>
        <taxon>Bacteria</taxon>
        <taxon>Pseudomonadati</taxon>
        <taxon>Pseudomonadota</taxon>
        <taxon>Gammaproteobacteria</taxon>
        <taxon>Enterobacterales</taxon>
        <taxon>Enterobacteriaceae</taxon>
        <taxon>Salmonella</taxon>
    </lineage>
</organism>
<reference key="1">
    <citation type="journal article" date="2009" name="BMC Genomics">
        <title>Pseudogene accumulation in the evolutionary histories of Salmonella enterica serovars Paratyphi A and Typhi.</title>
        <authorList>
            <person name="Holt K.E."/>
            <person name="Thomson N.R."/>
            <person name="Wain J."/>
            <person name="Langridge G.C."/>
            <person name="Hasan R."/>
            <person name="Bhutta Z.A."/>
            <person name="Quail M.A."/>
            <person name="Norbertczak H."/>
            <person name="Walker D."/>
            <person name="Simmonds M."/>
            <person name="White B."/>
            <person name="Bason N."/>
            <person name="Mungall K."/>
            <person name="Dougan G."/>
            <person name="Parkhill J."/>
        </authorList>
    </citation>
    <scope>NUCLEOTIDE SEQUENCE [LARGE SCALE GENOMIC DNA]</scope>
    <source>
        <strain>AKU_12601</strain>
    </source>
</reference>
<gene>
    <name evidence="1" type="primary">tusC</name>
    <name type="ordered locus">SSPA3095</name>
</gene>
<dbReference type="EMBL" id="FM200053">
    <property type="protein sequence ID" value="CAR61346.1"/>
    <property type="molecule type" value="Genomic_DNA"/>
</dbReference>
<dbReference type="RefSeq" id="WP_000820707.1">
    <property type="nucleotide sequence ID" value="NC_011147.1"/>
</dbReference>
<dbReference type="SMR" id="B5BGZ6"/>
<dbReference type="KEGG" id="sek:SSPA3095"/>
<dbReference type="HOGENOM" id="CLU_155943_1_0_6"/>
<dbReference type="Proteomes" id="UP000001869">
    <property type="component" value="Chromosome"/>
</dbReference>
<dbReference type="GO" id="GO:0005737">
    <property type="term" value="C:cytoplasm"/>
    <property type="evidence" value="ECO:0007669"/>
    <property type="project" value="UniProtKB-SubCell"/>
</dbReference>
<dbReference type="GO" id="GO:0008033">
    <property type="term" value="P:tRNA processing"/>
    <property type="evidence" value="ECO:0007669"/>
    <property type="project" value="UniProtKB-UniRule"/>
</dbReference>
<dbReference type="Gene3D" id="3.40.1260.10">
    <property type="entry name" value="DsrEFH-like"/>
    <property type="match status" value="1"/>
</dbReference>
<dbReference type="HAMAP" id="MF_00389">
    <property type="entry name" value="Thiourid_synth_C"/>
    <property type="match status" value="1"/>
</dbReference>
<dbReference type="InterPro" id="IPR027396">
    <property type="entry name" value="DsrEFH-like"/>
</dbReference>
<dbReference type="InterPro" id="IPR003787">
    <property type="entry name" value="Sulphur_relay_DsrE/F-like"/>
</dbReference>
<dbReference type="InterPro" id="IPR037450">
    <property type="entry name" value="Sulphur_relay_TusC"/>
</dbReference>
<dbReference type="InterPro" id="IPR017462">
    <property type="entry name" value="Sulphur_relay_TusC/DsrF"/>
</dbReference>
<dbReference type="NCBIfam" id="NF001238">
    <property type="entry name" value="PRK00211.1"/>
    <property type="match status" value="1"/>
</dbReference>
<dbReference type="NCBIfam" id="TIGR03010">
    <property type="entry name" value="sulf_tusC_dsrF"/>
    <property type="match status" value="1"/>
</dbReference>
<dbReference type="PANTHER" id="PTHR38780">
    <property type="entry name" value="PROTEIN TUSC"/>
    <property type="match status" value="1"/>
</dbReference>
<dbReference type="PANTHER" id="PTHR38780:SF1">
    <property type="entry name" value="PROTEIN TUSC"/>
    <property type="match status" value="1"/>
</dbReference>
<dbReference type="Pfam" id="PF02635">
    <property type="entry name" value="DsrE"/>
    <property type="match status" value="1"/>
</dbReference>
<dbReference type="SUPFAM" id="SSF75169">
    <property type="entry name" value="DsrEFH-like"/>
    <property type="match status" value="1"/>
</dbReference>
<accession>B5BGZ6</accession>
<proteinExistence type="inferred from homology"/>
<name>TUSC_SALPK</name>
<protein>
    <recommendedName>
        <fullName evidence="1">Protein TusC</fullName>
    </recommendedName>
    <alternativeName>
        <fullName evidence="1">tRNA 2-thiouridine synthesizing protein C</fullName>
    </alternativeName>
</protein>